<feature type="chain" id="PRO_0000332488" description="UDP-N-acetylenolpyruvoylglucosamine reductase">
    <location>
        <begin position="1"/>
        <end position="306"/>
    </location>
</feature>
<feature type="domain" description="FAD-binding PCMH-type" evidence="1">
    <location>
        <begin position="30"/>
        <end position="216"/>
    </location>
</feature>
<feature type="active site" evidence="1">
    <location>
        <position position="180"/>
    </location>
</feature>
<feature type="active site" description="Proton donor" evidence="1">
    <location>
        <position position="230"/>
    </location>
</feature>
<feature type="active site" evidence="1">
    <location>
        <position position="301"/>
    </location>
</feature>
<evidence type="ECO:0000255" key="1">
    <source>
        <dbReference type="HAMAP-Rule" id="MF_00037"/>
    </source>
</evidence>
<comment type="function">
    <text evidence="1">Cell wall formation.</text>
</comment>
<comment type="catalytic activity">
    <reaction evidence="1">
        <text>UDP-N-acetyl-alpha-D-muramate + NADP(+) = UDP-N-acetyl-3-O-(1-carboxyvinyl)-alpha-D-glucosamine + NADPH + H(+)</text>
        <dbReference type="Rhea" id="RHEA:12248"/>
        <dbReference type="ChEBI" id="CHEBI:15378"/>
        <dbReference type="ChEBI" id="CHEBI:57783"/>
        <dbReference type="ChEBI" id="CHEBI:58349"/>
        <dbReference type="ChEBI" id="CHEBI:68483"/>
        <dbReference type="ChEBI" id="CHEBI:70757"/>
        <dbReference type="EC" id="1.3.1.98"/>
    </reaction>
</comment>
<comment type="cofactor">
    <cofactor evidence="1">
        <name>FAD</name>
        <dbReference type="ChEBI" id="CHEBI:57692"/>
    </cofactor>
</comment>
<comment type="pathway">
    <text evidence="1">Cell wall biogenesis; peptidoglycan biosynthesis.</text>
</comment>
<comment type="subcellular location">
    <subcellularLocation>
        <location evidence="1">Cytoplasm</location>
    </subcellularLocation>
</comment>
<comment type="similarity">
    <text evidence="1">Belongs to the MurB family.</text>
</comment>
<sequence>MISEDLKLSLYAEGCDIKQNEFLKYYTSFRIGGPVPYILFPKTLNAFVNALSQLVKRDIPFRIIGQGTNLIISDEPLKFVVLSTKYLNKMNFEEKNNMDLIVEAQSGVSLSALSFLLSEDGYSGLEFACGIPGSVGGGVYMNAGAYGGEMKDVVLETTVYDLRDGKVKTLNKGDLEFGYRTSILQEGSFILLSTKFLLKKDELKRIKSKLIDFSTRRWEKQPIDLPSAGSIFKRPKPDFFVGTTIENLGLKGFSIGEAQISTKHAGFIINKGNATFKDVISLIEYVKRIVKDKYNVDLQVEPEIWK</sequence>
<gene>
    <name evidence="1" type="primary">murB</name>
    <name type="ordered locus">Pmob_0974</name>
</gene>
<reference key="1">
    <citation type="submission" date="2007-11" db="EMBL/GenBank/DDBJ databases">
        <title>Complete sequence of Petroga mobilis SJ95.</title>
        <authorList>
            <consortium name="US DOE Joint Genome Institute"/>
            <person name="Copeland A."/>
            <person name="Lucas S."/>
            <person name="Lapidus A."/>
            <person name="Barry K."/>
            <person name="Glavina del Rio T."/>
            <person name="Dalin E."/>
            <person name="Tice H."/>
            <person name="Pitluck S."/>
            <person name="Meincke L."/>
            <person name="Brettin T."/>
            <person name="Bruce D."/>
            <person name="Detter J.C."/>
            <person name="Han C."/>
            <person name="Kuske C.R."/>
            <person name="Schmutz J."/>
            <person name="Larimer F."/>
            <person name="Land M."/>
            <person name="Hauser L."/>
            <person name="Kyrpides N."/>
            <person name="Mikhailova N."/>
            <person name="Noll K."/>
            <person name="Richardson P."/>
        </authorList>
    </citation>
    <scope>NUCLEOTIDE SEQUENCE [LARGE SCALE GENOMIC DNA]</scope>
    <source>
        <strain>DSM 10674 / SJ95</strain>
    </source>
</reference>
<proteinExistence type="inferred from homology"/>
<dbReference type="EC" id="1.3.1.98" evidence="1"/>
<dbReference type="EMBL" id="CP000879">
    <property type="protein sequence ID" value="ABX31696.1"/>
    <property type="molecule type" value="Genomic_DNA"/>
</dbReference>
<dbReference type="RefSeq" id="WP_012208799.1">
    <property type="nucleotide sequence ID" value="NC_010003.1"/>
</dbReference>
<dbReference type="SMR" id="A9BJV3"/>
<dbReference type="STRING" id="403833.Pmob_0974"/>
<dbReference type="KEGG" id="pmo:Pmob_0974"/>
<dbReference type="eggNOG" id="COG0812">
    <property type="taxonomic scope" value="Bacteria"/>
</dbReference>
<dbReference type="HOGENOM" id="CLU_035304_1_1_0"/>
<dbReference type="OrthoDB" id="9804753at2"/>
<dbReference type="UniPathway" id="UPA00219"/>
<dbReference type="Proteomes" id="UP000000789">
    <property type="component" value="Chromosome"/>
</dbReference>
<dbReference type="GO" id="GO:0005829">
    <property type="term" value="C:cytosol"/>
    <property type="evidence" value="ECO:0007669"/>
    <property type="project" value="TreeGrafter"/>
</dbReference>
<dbReference type="GO" id="GO:0071949">
    <property type="term" value="F:FAD binding"/>
    <property type="evidence" value="ECO:0007669"/>
    <property type="project" value="InterPro"/>
</dbReference>
<dbReference type="GO" id="GO:0008762">
    <property type="term" value="F:UDP-N-acetylmuramate dehydrogenase activity"/>
    <property type="evidence" value="ECO:0007669"/>
    <property type="project" value="UniProtKB-UniRule"/>
</dbReference>
<dbReference type="GO" id="GO:0051301">
    <property type="term" value="P:cell division"/>
    <property type="evidence" value="ECO:0007669"/>
    <property type="project" value="UniProtKB-KW"/>
</dbReference>
<dbReference type="GO" id="GO:0071555">
    <property type="term" value="P:cell wall organization"/>
    <property type="evidence" value="ECO:0007669"/>
    <property type="project" value="UniProtKB-KW"/>
</dbReference>
<dbReference type="GO" id="GO:0009252">
    <property type="term" value="P:peptidoglycan biosynthetic process"/>
    <property type="evidence" value="ECO:0007669"/>
    <property type="project" value="UniProtKB-UniRule"/>
</dbReference>
<dbReference type="GO" id="GO:0008360">
    <property type="term" value="P:regulation of cell shape"/>
    <property type="evidence" value="ECO:0007669"/>
    <property type="project" value="UniProtKB-KW"/>
</dbReference>
<dbReference type="Gene3D" id="3.30.465.10">
    <property type="match status" value="1"/>
</dbReference>
<dbReference type="Gene3D" id="3.90.78.10">
    <property type="entry name" value="UDP-N-acetylenolpyruvoylglucosamine reductase, C-terminal domain"/>
    <property type="match status" value="1"/>
</dbReference>
<dbReference type="Gene3D" id="3.30.43.10">
    <property type="entry name" value="Uridine Diphospho-n-acetylenolpyruvylglucosamine Reductase, domain 2"/>
    <property type="match status" value="1"/>
</dbReference>
<dbReference type="HAMAP" id="MF_00037">
    <property type="entry name" value="MurB"/>
    <property type="match status" value="1"/>
</dbReference>
<dbReference type="InterPro" id="IPR016166">
    <property type="entry name" value="FAD-bd_PCMH"/>
</dbReference>
<dbReference type="InterPro" id="IPR036318">
    <property type="entry name" value="FAD-bd_PCMH-like_sf"/>
</dbReference>
<dbReference type="InterPro" id="IPR016167">
    <property type="entry name" value="FAD-bd_PCMH_sub1"/>
</dbReference>
<dbReference type="InterPro" id="IPR016169">
    <property type="entry name" value="FAD-bd_PCMH_sub2"/>
</dbReference>
<dbReference type="InterPro" id="IPR003170">
    <property type="entry name" value="MurB"/>
</dbReference>
<dbReference type="InterPro" id="IPR011601">
    <property type="entry name" value="MurB_C"/>
</dbReference>
<dbReference type="InterPro" id="IPR036635">
    <property type="entry name" value="MurB_C_sf"/>
</dbReference>
<dbReference type="InterPro" id="IPR006094">
    <property type="entry name" value="Oxid_FAD_bind_N"/>
</dbReference>
<dbReference type="NCBIfam" id="TIGR00179">
    <property type="entry name" value="murB"/>
    <property type="match status" value="1"/>
</dbReference>
<dbReference type="NCBIfam" id="NF010480">
    <property type="entry name" value="PRK13905.1"/>
    <property type="match status" value="1"/>
</dbReference>
<dbReference type="PANTHER" id="PTHR21071">
    <property type="entry name" value="UDP-N-ACETYLENOLPYRUVOYLGLUCOSAMINE REDUCTASE"/>
    <property type="match status" value="1"/>
</dbReference>
<dbReference type="PANTHER" id="PTHR21071:SF4">
    <property type="entry name" value="UDP-N-ACETYLENOLPYRUVOYLGLUCOSAMINE REDUCTASE"/>
    <property type="match status" value="1"/>
</dbReference>
<dbReference type="Pfam" id="PF01565">
    <property type="entry name" value="FAD_binding_4"/>
    <property type="match status" value="1"/>
</dbReference>
<dbReference type="Pfam" id="PF02873">
    <property type="entry name" value="MurB_C"/>
    <property type="match status" value="1"/>
</dbReference>
<dbReference type="SUPFAM" id="SSF56176">
    <property type="entry name" value="FAD-binding/transporter-associated domain-like"/>
    <property type="match status" value="1"/>
</dbReference>
<dbReference type="SUPFAM" id="SSF56194">
    <property type="entry name" value="Uridine diphospho-N-Acetylenolpyruvylglucosamine reductase, MurB, C-terminal domain"/>
    <property type="match status" value="1"/>
</dbReference>
<dbReference type="PROSITE" id="PS51387">
    <property type="entry name" value="FAD_PCMH"/>
    <property type="match status" value="1"/>
</dbReference>
<organism>
    <name type="scientific">Petrotoga mobilis (strain DSM 10674 / SJ95)</name>
    <dbReference type="NCBI Taxonomy" id="403833"/>
    <lineage>
        <taxon>Bacteria</taxon>
        <taxon>Thermotogati</taxon>
        <taxon>Thermotogota</taxon>
        <taxon>Thermotogae</taxon>
        <taxon>Petrotogales</taxon>
        <taxon>Petrotogaceae</taxon>
        <taxon>Petrotoga</taxon>
    </lineage>
</organism>
<name>MURB_PETMO</name>
<accession>A9BJV3</accession>
<keyword id="KW-0131">Cell cycle</keyword>
<keyword id="KW-0132">Cell division</keyword>
<keyword id="KW-0133">Cell shape</keyword>
<keyword id="KW-0961">Cell wall biogenesis/degradation</keyword>
<keyword id="KW-0963">Cytoplasm</keyword>
<keyword id="KW-0274">FAD</keyword>
<keyword id="KW-0285">Flavoprotein</keyword>
<keyword id="KW-0521">NADP</keyword>
<keyword id="KW-0560">Oxidoreductase</keyword>
<keyword id="KW-0573">Peptidoglycan synthesis</keyword>
<protein>
    <recommendedName>
        <fullName evidence="1">UDP-N-acetylenolpyruvoylglucosamine reductase</fullName>
        <ecNumber evidence="1">1.3.1.98</ecNumber>
    </recommendedName>
    <alternativeName>
        <fullName evidence="1">UDP-N-acetylmuramate dehydrogenase</fullName>
    </alternativeName>
</protein>